<protein>
    <recommendedName>
        <fullName>Histone H2A.2.1</fullName>
    </recommendedName>
</protein>
<sequence>MDGSKAKKVAAKKFGGPRKKSVTKSIKAGLQFPVGRIGRYLKKGRYAQRVGSGAPVYLAAVLEYLAAEVLELAGNAAKDNKKTRIVPRHLLLAIRNDQELGRLLSGVTIAHGGVIPNINPVLLPKKAAEKAEKAGAAPKSPKKTTKSPKKA</sequence>
<accession>P02276</accession>
<comment type="function">
    <text>Core component of nucleosome. Nucleosomes wrap and compact DNA into chromatin, limiting DNA accessibility to the cellular machineries which require DNA as a template. Histones thereby play a central role in transcription regulation, DNA repair, DNA replication and chromosomal stability. DNA accessibility is regulated via a complex set of post-translational modifications of histones, also called histone code, and nucleosome remodeling.</text>
</comment>
<comment type="subunit">
    <text>The nucleosome is a histone octamer containing two molecules each of H2A, H2B, H3 and H4 assembled in one H3-H4 heterotetramer and two H2A-H2B heterodimers. The octamer wraps approximately 147 bp of DNA.</text>
</comment>
<comment type="subcellular location">
    <subcellularLocation>
        <location>Nucleus</location>
    </subcellularLocation>
    <subcellularLocation>
        <location>Chromosome</location>
    </subcellularLocation>
</comment>
<comment type="domain">
    <text>Contains 2 SPKK motifs which may interact with the minor groove of A/T-rich DNA sites. Phosphorylation of this motif may regulate DNA binding. This motif is reiterated in both termini of histone H1 and in the N-terminus of sea urchin histones H2B, but its presence in the C-terminus seems to be unique to plant H2A.</text>
</comment>
<comment type="PTM">
    <text evidence="2">Phosphorylated within its C-terminal part, probably at the SPKK motifs.</text>
</comment>
<comment type="similarity">
    <text evidence="4">Belongs to the histone H2A family.</text>
</comment>
<organism>
    <name type="scientific">Triticum aestivum</name>
    <name type="common">Wheat</name>
    <dbReference type="NCBI Taxonomy" id="4565"/>
    <lineage>
        <taxon>Eukaryota</taxon>
        <taxon>Viridiplantae</taxon>
        <taxon>Streptophyta</taxon>
        <taxon>Embryophyta</taxon>
        <taxon>Tracheophyta</taxon>
        <taxon>Spermatophyta</taxon>
        <taxon>Magnoliopsida</taxon>
        <taxon>Liliopsida</taxon>
        <taxon>Poales</taxon>
        <taxon>Poaceae</taxon>
        <taxon>BOP clade</taxon>
        <taxon>Pooideae</taxon>
        <taxon>Triticodae</taxon>
        <taxon>Triticeae</taxon>
        <taxon>Triticinae</taxon>
        <taxon>Triticum</taxon>
    </lineage>
</organism>
<feature type="chain" id="PRO_0000055292" description="Histone H2A.2.1">
    <location>
        <begin position="1"/>
        <end position="151"/>
    </location>
</feature>
<feature type="region of interest" description="Disordered" evidence="1">
    <location>
        <begin position="1"/>
        <end position="22"/>
    </location>
</feature>
<feature type="region of interest" description="Disordered" evidence="1">
    <location>
        <begin position="129"/>
        <end position="151"/>
    </location>
</feature>
<feature type="short sequence motif" description="SPKK motif 1">
    <location>
        <begin position="140"/>
        <end position="143"/>
    </location>
</feature>
<feature type="short sequence motif" description="SPKK motif 2">
    <location>
        <begin position="147"/>
        <end position="150"/>
    </location>
</feature>
<feature type="compositionally biased region" description="Basic residues" evidence="1">
    <location>
        <begin position="140"/>
        <end position="151"/>
    </location>
</feature>
<feature type="modified residue" description="N-acetylmethionine" evidence="3">
    <location>
        <position position="1"/>
    </location>
</feature>
<reference key="1">
    <citation type="journal article" date="1988" name="Eur. J. Biochem.">
        <title>The primary structure of the histone H2A(2) type from wheat germ. A core histone type with both, N-terminal and C-terminal extensions.</title>
        <authorList>
            <person name="Rodrigues J.A."/>
            <person name="Brandt W.F."/>
            <person name="von Holt C."/>
        </authorList>
    </citation>
    <scope>PROTEIN SEQUENCE</scope>
    <scope>ACETYLATION AT MET-1</scope>
    <source>
        <tissue>Germ</tissue>
    </source>
</reference>
<reference key="2">
    <citation type="journal article" date="1979" name="Biochim. Biophys. Acta">
        <title>Plant histone 2 from wheat germ, a family of histone H2a variants. Partial amino acid sequences.</title>
        <authorList>
            <person name="Rodrigues J.A."/>
            <person name="Brandt W.F."/>
            <person name="von Holt C."/>
        </authorList>
    </citation>
    <scope>PROTEIN SEQUENCE OF 1-37</scope>
    <source>
        <tissue>Germ</tissue>
    </source>
</reference>
<reference key="3">
    <citation type="journal article" date="1990" name="Plant Physiol.">
        <title>Phosphorylation of plant H2A histones.</title>
        <authorList>
            <person name="Green G.R."/>
            <person name="Gustavsen L.C."/>
            <person name="Poccia D.L."/>
        </authorList>
    </citation>
    <scope>PHOSPHORYLATION</scope>
</reference>
<keyword id="KW-0007">Acetylation</keyword>
<keyword id="KW-0158">Chromosome</keyword>
<keyword id="KW-0903">Direct protein sequencing</keyword>
<keyword id="KW-0238">DNA-binding</keyword>
<keyword id="KW-0544">Nucleosome core</keyword>
<keyword id="KW-0539">Nucleus</keyword>
<keyword id="KW-0597">Phosphoprotein</keyword>
<keyword id="KW-1185">Reference proteome</keyword>
<evidence type="ECO:0000256" key="1">
    <source>
        <dbReference type="SAM" id="MobiDB-lite"/>
    </source>
</evidence>
<evidence type="ECO:0000269" key="2">
    <source>
    </source>
</evidence>
<evidence type="ECO:0000269" key="3">
    <source>
    </source>
</evidence>
<evidence type="ECO:0000305" key="4"/>
<proteinExistence type="evidence at protein level"/>
<dbReference type="PIR" id="S00623">
    <property type="entry name" value="HSWT2A"/>
</dbReference>
<dbReference type="SMR" id="P02276"/>
<dbReference type="STRING" id="4565.P02276"/>
<dbReference type="iPTMnet" id="P02276"/>
<dbReference type="PaxDb" id="4565-Traes_1AS_E774FAB9E.1"/>
<dbReference type="eggNOG" id="KOG1756">
    <property type="taxonomic scope" value="Eukaryota"/>
</dbReference>
<dbReference type="Proteomes" id="UP000019116">
    <property type="component" value="Unplaced"/>
</dbReference>
<dbReference type="ExpressionAtlas" id="P02276">
    <property type="expression patterns" value="baseline and differential"/>
</dbReference>
<dbReference type="GO" id="GO:0000786">
    <property type="term" value="C:nucleosome"/>
    <property type="evidence" value="ECO:0000318"/>
    <property type="project" value="GO_Central"/>
</dbReference>
<dbReference type="GO" id="GO:0005634">
    <property type="term" value="C:nucleus"/>
    <property type="evidence" value="ECO:0000318"/>
    <property type="project" value="GO_Central"/>
</dbReference>
<dbReference type="GO" id="GO:0003677">
    <property type="term" value="F:DNA binding"/>
    <property type="evidence" value="ECO:0007669"/>
    <property type="project" value="UniProtKB-KW"/>
</dbReference>
<dbReference type="GO" id="GO:0046982">
    <property type="term" value="F:protein heterodimerization activity"/>
    <property type="evidence" value="ECO:0007669"/>
    <property type="project" value="InterPro"/>
</dbReference>
<dbReference type="GO" id="GO:0030527">
    <property type="term" value="F:structural constituent of chromatin"/>
    <property type="evidence" value="ECO:0000318"/>
    <property type="project" value="GO_Central"/>
</dbReference>
<dbReference type="GO" id="GO:0031507">
    <property type="term" value="P:heterochromatin formation"/>
    <property type="evidence" value="ECO:0000318"/>
    <property type="project" value="GO_Central"/>
</dbReference>
<dbReference type="CDD" id="cd00074">
    <property type="entry name" value="HFD_H2A"/>
    <property type="match status" value="1"/>
</dbReference>
<dbReference type="FunFam" id="1.10.20.10:FF:000026">
    <property type="entry name" value="Histone H2A"/>
    <property type="match status" value="1"/>
</dbReference>
<dbReference type="Gene3D" id="1.10.20.10">
    <property type="entry name" value="Histone, subunit A"/>
    <property type="match status" value="1"/>
</dbReference>
<dbReference type="InterPro" id="IPR009072">
    <property type="entry name" value="Histone-fold"/>
</dbReference>
<dbReference type="InterPro" id="IPR002119">
    <property type="entry name" value="Histone_H2A"/>
</dbReference>
<dbReference type="InterPro" id="IPR007125">
    <property type="entry name" value="Histone_H2A/H2B/H3"/>
</dbReference>
<dbReference type="InterPro" id="IPR032454">
    <property type="entry name" value="Histone_H2A_C"/>
</dbReference>
<dbReference type="InterPro" id="IPR032458">
    <property type="entry name" value="Histone_H2A_CS"/>
</dbReference>
<dbReference type="PANTHER" id="PTHR23430">
    <property type="entry name" value="HISTONE H2A"/>
    <property type="match status" value="1"/>
</dbReference>
<dbReference type="Pfam" id="PF00125">
    <property type="entry name" value="Histone"/>
    <property type="match status" value="1"/>
</dbReference>
<dbReference type="Pfam" id="PF16211">
    <property type="entry name" value="Histone_H2A_C"/>
    <property type="match status" value="1"/>
</dbReference>
<dbReference type="PRINTS" id="PR00620">
    <property type="entry name" value="HISTONEH2A"/>
</dbReference>
<dbReference type="SMART" id="SM00414">
    <property type="entry name" value="H2A"/>
    <property type="match status" value="1"/>
</dbReference>
<dbReference type="SUPFAM" id="SSF47113">
    <property type="entry name" value="Histone-fold"/>
    <property type="match status" value="1"/>
</dbReference>
<dbReference type="PROSITE" id="PS00046">
    <property type="entry name" value="HISTONE_H2A"/>
    <property type="match status" value="1"/>
</dbReference>
<name>H2A2_WHEAT</name>